<organism>
    <name type="scientific">Petromyzon marinus</name>
    <name type="common">Sea lamprey</name>
    <dbReference type="NCBI Taxonomy" id="7757"/>
    <lineage>
        <taxon>Eukaryota</taxon>
        <taxon>Metazoa</taxon>
        <taxon>Chordata</taxon>
        <taxon>Craniata</taxon>
        <taxon>Vertebrata</taxon>
        <taxon>Cyclostomata</taxon>
        <taxon>Hyperoartia</taxon>
        <taxon>Petromyzontiformes</taxon>
        <taxon>Petromyzontidae</taxon>
        <taxon>Petromyzon</taxon>
    </lineage>
</organism>
<keyword id="KW-0027">Amidation</keyword>
<keyword id="KW-0903">Direct protein sequencing</keyword>
<keyword id="KW-0372">Hormone</keyword>
<keyword id="KW-0873">Pyrrolidone carboxylic acid</keyword>
<keyword id="KW-0964">Secreted</keyword>
<name>GON3_PETMA</name>
<dbReference type="Proteomes" id="UP001318040">
    <property type="component" value="Unplaced"/>
</dbReference>
<dbReference type="GO" id="GO:0005576">
    <property type="term" value="C:extracellular region"/>
    <property type="evidence" value="ECO:0007669"/>
    <property type="project" value="UniProtKB-SubCell"/>
</dbReference>
<dbReference type="GO" id="GO:0005179">
    <property type="term" value="F:hormone activity"/>
    <property type="evidence" value="ECO:0007669"/>
    <property type="project" value="UniProtKB-KW"/>
</dbReference>
<dbReference type="InterPro" id="IPR002012">
    <property type="entry name" value="GnRH"/>
</dbReference>
<dbReference type="Pfam" id="PF00446">
    <property type="entry name" value="GnRH"/>
    <property type="match status" value="1"/>
</dbReference>
<dbReference type="PROSITE" id="PS00473">
    <property type="entry name" value="GNRH"/>
    <property type="match status" value="1"/>
</dbReference>
<accession>P30948</accession>
<reference key="1">
    <citation type="journal article" date="1993" name="Endocrinology">
        <title>Primary structure and biological activity of a third gonadotropin-releasing hormone from lamprey brain.</title>
        <authorList>
            <person name="Sower S.A."/>
            <person name="Chiang Y.-C."/>
            <person name="Lovas S."/>
            <person name="Conlon J.M."/>
        </authorList>
    </citation>
    <scope>PROTEIN SEQUENCE</scope>
    <scope>PYROGLUTAMATE FORMATION AT GLN-1</scope>
    <scope>AMIDATION AT GLY-10</scope>
    <source>
        <tissue>Brain</tissue>
    </source>
</reference>
<comment type="function">
    <text>Stimulates the secretion of gonadotropins; it stimulates the secretion of both luteinizing and follicle-stimulating hormones.</text>
</comment>
<comment type="subcellular location">
    <subcellularLocation>
        <location>Secreted</location>
    </subcellularLocation>
</comment>
<comment type="similarity">
    <text evidence="2">Belongs to the GnRH family.</text>
</comment>
<feature type="peptide" id="PRO_0000043960" description="Gonadoliberin-3">
    <location>
        <begin position="1"/>
        <end position="10"/>
    </location>
</feature>
<feature type="modified residue" description="Pyrrolidone carboxylic acid" evidence="1">
    <location>
        <position position="1"/>
    </location>
</feature>
<feature type="modified residue" description="Glycine amide" evidence="1">
    <location>
        <position position="10"/>
    </location>
</feature>
<protein>
    <recommendedName>
        <fullName>Gonadoliberin-3</fullName>
    </recommendedName>
    <alternativeName>
        <fullName>Gonadoliberin III</fullName>
    </alternativeName>
    <alternativeName>
        <fullName>Gonadotropin-releasing hormone III</fullName>
        <shortName>GnRH-III</shortName>
    </alternativeName>
    <alternativeName>
        <fullName>Luliberin III</fullName>
    </alternativeName>
</protein>
<evidence type="ECO:0000269" key="1">
    <source>
    </source>
</evidence>
<evidence type="ECO:0000305" key="2"/>
<sequence length="10" mass="1277">QHWSHDWKPG</sequence>
<proteinExistence type="evidence at protein level"/>